<accession>A6QFG1</accession>
<reference key="1">
    <citation type="journal article" date="2008" name="J. Bacteriol.">
        <title>Genome sequence of Staphylococcus aureus strain Newman and comparative analysis of staphylococcal genomes: polymorphism and evolution of two major pathogenicity islands.</title>
        <authorList>
            <person name="Baba T."/>
            <person name="Bae T."/>
            <person name="Schneewind O."/>
            <person name="Takeuchi F."/>
            <person name="Hiramatsu K."/>
        </authorList>
    </citation>
    <scope>NUCLEOTIDE SEQUENCE [LARGE SCALE GENOMIC DNA]</scope>
    <source>
        <strain>Newman</strain>
    </source>
</reference>
<feature type="chain" id="PRO_0000372110" description="Na(+)/H(+) antiporter subunit B1">
    <location>
        <begin position="1"/>
        <end position="142"/>
    </location>
</feature>
<feature type="transmembrane region" description="Helical" evidence="2">
    <location>
        <begin position="12"/>
        <end position="32"/>
    </location>
</feature>
<feature type="transmembrane region" description="Helical" evidence="2">
    <location>
        <begin position="37"/>
        <end position="57"/>
    </location>
</feature>
<feature type="transmembrane region" description="Helical" evidence="2">
    <location>
        <begin position="72"/>
        <end position="92"/>
    </location>
</feature>
<feature type="transmembrane region" description="Helical" evidence="2">
    <location>
        <begin position="116"/>
        <end position="136"/>
    </location>
</feature>
<name>MNHB1_STAAE</name>
<organism>
    <name type="scientific">Staphylococcus aureus (strain Newman)</name>
    <dbReference type="NCBI Taxonomy" id="426430"/>
    <lineage>
        <taxon>Bacteria</taxon>
        <taxon>Bacillati</taxon>
        <taxon>Bacillota</taxon>
        <taxon>Bacilli</taxon>
        <taxon>Bacillales</taxon>
        <taxon>Staphylococcaceae</taxon>
        <taxon>Staphylococcus</taxon>
    </lineage>
</organism>
<proteinExistence type="inferred from homology"/>
<gene>
    <name type="primary">mnhB1</name>
    <name type="ordered locus">NWMN_0821</name>
</gene>
<dbReference type="EMBL" id="AP009351">
    <property type="protein sequence ID" value="BAF67093.1"/>
    <property type="molecule type" value="Genomic_DNA"/>
</dbReference>
<dbReference type="RefSeq" id="WP_001081626.1">
    <property type="nucleotide sequence ID" value="NZ_JBBIAE010000002.1"/>
</dbReference>
<dbReference type="SMR" id="A6QFG1"/>
<dbReference type="GeneID" id="66839149"/>
<dbReference type="KEGG" id="sae:NWMN_0821"/>
<dbReference type="HOGENOM" id="CLU_101659_1_1_9"/>
<dbReference type="Proteomes" id="UP000006386">
    <property type="component" value="Chromosome"/>
</dbReference>
<dbReference type="GO" id="GO:0005886">
    <property type="term" value="C:plasma membrane"/>
    <property type="evidence" value="ECO:0007669"/>
    <property type="project" value="UniProtKB-SubCell"/>
</dbReference>
<dbReference type="GO" id="GO:0015297">
    <property type="term" value="F:antiporter activity"/>
    <property type="evidence" value="ECO:0007669"/>
    <property type="project" value="UniProtKB-KW"/>
</dbReference>
<dbReference type="GO" id="GO:0008324">
    <property type="term" value="F:monoatomic cation transmembrane transporter activity"/>
    <property type="evidence" value="ECO:0007669"/>
    <property type="project" value="InterPro"/>
</dbReference>
<dbReference type="GO" id="GO:1902600">
    <property type="term" value="P:proton transmembrane transport"/>
    <property type="evidence" value="ECO:0007669"/>
    <property type="project" value="UniProtKB-KW"/>
</dbReference>
<dbReference type="GO" id="GO:0006814">
    <property type="term" value="P:sodium ion transport"/>
    <property type="evidence" value="ECO:0007669"/>
    <property type="project" value="UniProtKB-KW"/>
</dbReference>
<dbReference type="InterPro" id="IPR050622">
    <property type="entry name" value="CPA3_antiporter_subunitB"/>
</dbReference>
<dbReference type="InterPro" id="IPR005281">
    <property type="entry name" value="CPA3_sub_B"/>
</dbReference>
<dbReference type="InterPro" id="IPR007182">
    <property type="entry name" value="MnhB"/>
</dbReference>
<dbReference type="NCBIfam" id="TIGR00943">
    <property type="entry name" value="2a6301s02"/>
    <property type="match status" value="1"/>
</dbReference>
<dbReference type="NCBIfam" id="NF009223">
    <property type="entry name" value="PRK12573.1"/>
    <property type="match status" value="1"/>
</dbReference>
<dbReference type="PANTHER" id="PTHR33932">
    <property type="entry name" value="NA(+)/H(+) ANTIPORTER SUBUNIT B"/>
    <property type="match status" value="1"/>
</dbReference>
<dbReference type="PANTHER" id="PTHR33932:SF4">
    <property type="entry name" value="NA(+)_H(+) ANTIPORTER SUBUNIT B"/>
    <property type="match status" value="1"/>
</dbReference>
<dbReference type="Pfam" id="PF04039">
    <property type="entry name" value="MnhB"/>
    <property type="match status" value="1"/>
</dbReference>
<evidence type="ECO:0000250" key="1"/>
<evidence type="ECO:0000255" key="2"/>
<evidence type="ECO:0000305" key="3"/>
<protein>
    <recommendedName>
        <fullName>Na(+)/H(+) antiporter subunit B1</fullName>
    </recommendedName>
    <alternativeName>
        <fullName>Mnh complex subunit B1</fullName>
    </alternativeName>
</protein>
<sequence>MNRQQNDLILQFAAVIIFFMVMVFGFSLFLAGHYTPGGGFVGGLLFASSLVIITIAFDIETMRKIFPLDFKILIGIGLVFCIATPIASWFLGKNFFTHVTFDIPLFILEPVHMTTAVFFDFGVLCAVVGTVMTIIISIGENE</sequence>
<comment type="function">
    <text evidence="1">Mnh complex is a Na(+)/H(+) antiporter involved in Na(+) excretion.</text>
</comment>
<comment type="subunit">
    <text evidence="1">May form a heterooligomeric complex that consists of seven subunits: mnhA1, mnhB1, mnhC1, mnhD1, mnhE1, mnhF1 and mnhG1.</text>
</comment>
<comment type="subcellular location">
    <subcellularLocation>
        <location evidence="3">Cell membrane</location>
        <topology evidence="3">Multi-pass membrane protein</topology>
    </subcellularLocation>
</comment>
<comment type="similarity">
    <text evidence="3">Belongs to the CPA3 antiporters (TC 2.A.63) subunit B family.</text>
</comment>
<keyword id="KW-0050">Antiport</keyword>
<keyword id="KW-1003">Cell membrane</keyword>
<keyword id="KW-0375">Hydrogen ion transport</keyword>
<keyword id="KW-0406">Ion transport</keyword>
<keyword id="KW-0472">Membrane</keyword>
<keyword id="KW-0915">Sodium</keyword>
<keyword id="KW-0739">Sodium transport</keyword>
<keyword id="KW-0812">Transmembrane</keyword>
<keyword id="KW-1133">Transmembrane helix</keyword>
<keyword id="KW-0813">Transport</keyword>